<accession>P00983</accession>
<proteinExistence type="evidence at protein level"/>
<comment type="function">
    <text evidence="1 3">The mixture of mambaquaretin-7 and mambaquaretin-8 interacts with vasopressin V2 receptor (V2R/AVPR2), probably in a selective manner (PubMed:35122240). This mixture inhibits vasopressin binding human V2R in the nanomolar range (Ki=3.14 nM), and also potently inhibits vasopressin-induced cAMP production (IC(50)=58 nM) (PubMed:35122240). In vivo, intraperitoneal injection of this protein into rats increases diuresis, without any loss of electrolytes (By similarity).</text>
</comment>
<comment type="subcellular location">
    <subcellularLocation>
        <location evidence="4">Secreted</location>
    </subcellularLocation>
</comment>
<comment type="tissue specificity">
    <text>Expressed by the venom gland.</text>
</comment>
<comment type="domain">
    <text evidence="1">Exploits its two major loops and engages more positions in its interaction with V2R. The pharmacophore defined by numerous amino acids positioned in loop 1 (9 to 18) and loop 2 (34, 39 and 44) may be at the origin of the absolute selectivity of this protein for V2R.</text>
</comment>
<comment type="mass spectrometry" mass="6465.01" method="MALDI" evidence="3">
    <text>MQ7, Monoisotopic mass.</text>
</comment>
<comment type="mass spectrometry" mass="6480.99" method="MALDI" evidence="3">
    <text>MQ8, Monoisotopic mass.</text>
</comment>
<comment type="miscellaneous">
    <text evidence="4">Negative results: mambaquaretin-7 is a weak trypsin inhibitor.</text>
</comment>
<comment type="similarity">
    <text evidence="7">Belongs to the venom Kunitz-type family.</text>
</comment>
<comment type="caution">
    <text evidence="8">As Mambaquaretin-7 and Mambaquaretin-8 (different from the single residue A27S) could not be separated from each other, the characterization was done on their mixture.</text>
</comment>
<feature type="chain" id="PRO_0000155435" description="Mambaquaretin-7" evidence="3 4">
    <location>
        <begin position="1"/>
        <end position="57"/>
    </location>
</feature>
<feature type="domain" description="BPTI/Kunitz inhibitor" evidence="2">
    <location>
        <begin position="5"/>
        <end position="55"/>
    </location>
</feature>
<feature type="disulfide bond" evidence="2">
    <location>
        <begin position="5"/>
        <end position="55"/>
    </location>
</feature>
<feature type="disulfide bond" evidence="2">
    <location>
        <begin position="14"/>
        <end position="38"/>
    </location>
</feature>
<feature type="disulfide bond" evidence="2">
    <location>
        <begin position="30"/>
        <end position="51"/>
    </location>
</feature>
<feature type="sequence variant" description="In Mambaquaretin-8." evidence="3">
    <original>A</original>
    <variation>S</variation>
    <location>
        <position position="27"/>
    </location>
</feature>
<protein>
    <recommendedName>
        <fullName evidence="5">Mambaquaretin-7</fullName>
        <shortName evidence="5">MQ7</shortName>
    </recommendedName>
    <alternativeName>
        <fullName evidence="7">Kunitz-type serine protease inhibitor homolog dendrotoxin B</fullName>
        <shortName evidence="7">DTX-B</shortName>
    </alternativeName>
    <alternativeName>
        <fullName evidence="5">Mambaquaretin-8</fullName>
        <shortName evidence="5">MQ8</shortName>
    </alternativeName>
    <alternativeName>
        <fullName evidence="6">Protein B</fullName>
    </alternativeName>
    <alternativeName>
        <fullName evidence="5">Upsilon-Dp2b</fullName>
    </alternativeName>
    <alternativeName>
        <fullName evidence="5">Upsilon-Dp2c</fullName>
    </alternativeName>
    <alternativeName>
        <fullName>Venom basic protease inhibitor B</fullName>
    </alternativeName>
</protein>
<reference key="1">
    <citation type="journal article" date="1981" name="Hoppe-Seyler's Z. Physiol. Chem.">
        <title>The amino acid sequence of a weak trypsin inhibitor B from Dendroaspis polylepis polylepis (black mamba) venom.</title>
        <authorList>
            <person name="Strydom D.J."/>
            <person name="Joubert F.J."/>
        </authorList>
    </citation>
    <scope>PROTEIN SEQUENCE</scope>
    <scope>SUBCELLULAR LOCATION</scope>
    <source>
        <tissue>Venom</tissue>
    </source>
</reference>
<reference key="2">
    <citation type="journal article" date="2022" name="Br. J. Pharmacol.">
        <title>A new Kunitz-type snake toxin family associated with an original mode of interaction with the vasopressin 2 receptor.</title>
        <authorList>
            <person name="Droctove L."/>
            <person name="Ciolek J."/>
            <person name="Mendre C."/>
            <person name="Chorfa A."/>
            <person name="Huerta P."/>
            <person name="Carvalho C."/>
            <person name="Gouin C."/>
            <person name="Lancien M."/>
            <person name="Stanajic-Petrovic G."/>
            <person name="Braco L."/>
            <person name="Blanchet G."/>
            <person name="Upert G."/>
            <person name="De Pauw G."/>
            <person name="Barbe P."/>
            <person name="Keck M."/>
            <person name="Mourier G."/>
            <person name="Mouillac B."/>
            <person name="Denis S."/>
            <person name="Rodriguez de la Vega R.C."/>
            <person name="Quinton L."/>
            <person name="Gilles N."/>
        </authorList>
    </citation>
    <scope>PROTEIN SEQUENCE (MQ7 AND MQ8)</scope>
    <scope>FUNCTION</scope>
    <scope>MASS SPECTROMETRY</scope>
</reference>
<dbReference type="PIR" id="A01214">
    <property type="entry name" value="TIEPVB"/>
</dbReference>
<dbReference type="SMR" id="P00983"/>
<dbReference type="MEROPS" id="I02.056"/>
<dbReference type="GO" id="GO:0005615">
    <property type="term" value="C:extracellular space"/>
    <property type="evidence" value="ECO:0007669"/>
    <property type="project" value="TreeGrafter"/>
</dbReference>
<dbReference type="GO" id="GO:0004867">
    <property type="term" value="F:serine-type endopeptidase inhibitor activity"/>
    <property type="evidence" value="ECO:0007669"/>
    <property type="project" value="InterPro"/>
</dbReference>
<dbReference type="GO" id="GO:0090729">
    <property type="term" value="F:toxin activity"/>
    <property type="evidence" value="ECO:0007669"/>
    <property type="project" value="UniProtKB-KW"/>
</dbReference>
<dbReference type="CDD" id="cd22595">
    <property type="entry name" value="Kunitz_dendrotoxin"/>
    <property type="match status" value="1"/>
</dbReference>
<dbReference type="Gene3D" id="4.10.410.10">
    <property type="entry name" value="Pancreatic trypsin inhibitor Kunitz domain"/>
    <property type="match status" value="1"/>
</dbReference>
<dbReference type="InterPro" id="IPR002223">
    <property type="entry name" value="Kunitz_BPTI"/>
</dbReference>
<dbReference type="InterPro" id="IPR036880">
    <property type="entry name" value="Kunitz_BPTI_sf"/>
</dbReference>
<dbReference type="InterPro" id="IPR020901">
    <property type="entry name" value="Prtase_inh_Kunz-CS"/>
</dbReference>
<dbReference type="InterPro" id="IPR050098">
    <property type="entry name" value="TFPI/VKTCI-like"/>
</dbReference>
<dbReference type="PANTHER" id="PTHR10083:SF374">
    <property type="entry name" value="BPTI_KUNITZ INHIBITOR DOMAIN-CONTAINING PROTEIN"/>
    <property type="match status" value="1"/>
</dbReference>
<dbReference type="PANTHER" id="PTHR10083">
    <property type="entry name" value="KUNITZ-TYPE PROTEASE INHIBITOR-RELATED"/>
    <property type="match status" value="1"/>
</dbReference>
<dbReference type="Pfam" id="PF00014">
    <property type="entry name" value="Kunitz_BPTI"/>
    <property type="match status" value="1"/>
</dbReference>
<dbReference type="PRINTS" id="PR00759">
    <property type="entry name" value="BASICPTASE"/>
</dbReference>
<dbReference type="SMART" id="SM00131">
    <property type="entry name" value="KU"/>
    <property type="match status" value="1"/>
</dbReference>
<dbReference type="SUPFAM" id="SSF57362">
    <property type="entry name" value="BPTI-like"/>
    <property type="match status" value="1"/>
</dbReference>
<dbReference type="PROSITE" id="PS00280">
    <property type="entry name" value="BPTI_KUNITZ_1"/>
    <property type="match status" value="1"/>
</dbReference>
<dbReference type="PROSITE" id="PS50279">
    <property type="entry name" value="BPTI_KUNITZ_2"/>
    <property type="match status" value="1"/>
</dbReference>
<sequence length="57" mass="6476">RPYACELIVAAGPCMFFISAFYYSKGANKCYPFTYSGCRGNANRFKTIEECRRTCVV</sequence>
<evidence type="ECO:0000250" key="1">
    <source>
        <dbReference type="UniProtKB" id="A0A1Z0YU59"/>
    </source>
</evidence>
<evidence type="ECO:0000255" key="2">
    <source>
        <dbReference type="PROSITE-ProRule" id="PRU00031"/>
    </source>
</evidence>
<evidence type="ECO:0000269" key="3">
    <source>
    </source>
</evidence>
<evidence type="ECO:0000269" key="4">
    <source>
    </source>
</evidence>
<evidence type="ECO:0000303" key="5">
    <source>
    </source>
</evidence>
<evidence type="ECO:0000303" key="6">
    <source>
    </source>
</evidence>
<evidence type="ECO:0000305" key="7"/>
<evidence type="ECO:0000305" key="8">
    <source>
    </source>
</evidence>
<organism>
    <name type="scientific">Dendroaspis polylepis polylepis</name>
    <name type="common">Black mamba</name>
    <dbReference type="NCBI Taxonomy" id="8620"/>
    <lineage>
        <taxon>Eukaryota</taxon>
        <taxon>Metazoa</taxon>
        <taxon>Chordata</taxon>
        <taxon>Craniata</taxon>
        <taxon>Vertebrata</taxon>
        <taxon>Euteleostomi</taxon>
        <taxon>Lepidosauria</taxon>
        <taxon>Squamata</taxon>
        <taxon>Bifurcata</taxon>
        <taxon>Unidentata</taxon>
        <taxon>Episquamata</taxon>
        <taxon>Toxicofera</taxon>
        <taxon>Serpentes</taxon>
        <taxon>Colubroidea</taxon>
        <taxon>Elapidae</taxon>
        <taxon>Elapinae</taxon>
        <taxon>Dendroaspis</taxon>
    </lineage>
</organism>
<name>MAMB7_DENPO</name>
<keyword id="KW-0903">Direct protein sequencing</keyword>
<keyword id="KW-1015">Disulfide bond</keyword>
<keyword id="KW-1213">G-protein coupled receptor impairing toxin</keyword>
<keyword id="KW-0964">Secreted</keyword>
<keyword id="KW-0800">Toxin</keyword>